<sequence length="293" mass="33352">MTENNDIKMVIITGMSGAGKTVALQSFEDLGYFCVDNLPPMLLPKFVELMADSKSKMNKVALGIDLRGREFFEHLWGALDDLSERTWIIPHILFLDAKDSTLVTRYKETRRSHPLAPTGLPLKGIEAERGLLTDMKARANIVLDTSDLKPKELREKIVQLFSTETEQAFRVNVMSFGFKYGIPIDADLVFDVRFLPNPYYIPHMKPLTGLDEEVSSYVLKFNETHKFLEKLTDLITFMLPHYKREGKSQLVIAIGCTGGQHRSVTLAEYLGKHLKPDYSVHVSHRDVEKRKGH</sequence>
<comment type="function">
    <text evidence="1">Displays ATPase and GTPase activities.</text>
</comment>
<comment type="similarity">
    <text evidence="1">Belongs to the RapZ-like family.</text>
</comment>
<reference key="1">
    <citation type="journal article" date="2008" name="Chem. Biol. Interact.">
        <title>Extending the Bacillus cereus group genomics to putative food-borne pathogens of different toxicity.</title>
        <authorList>
            <person name="Lapidus A."/>
            <person name="Goltsman E."/>
            <person name="Auger S."/>
            <person name="Galleron N."/>
            <person name="Segurens B."/>
            <person name="Dossat C."/>
            <person name="Land M.L."/>
            <person name="Broussolle V."/>
            <person name="Brillard J."/>
            <person name="Guinebretiere M.-H."/>
            <person name="Sanchis V."/>
            <person name="Nguen-the C."/>
            <person name="Lereclus D."/>
            <person name="Richardson P."/>
            <person name="Wincker P."/>
            <person name="Weissenbach J."/>
            <person name="Ehrlich S.D."/>
            <person name="Sorokin A."/>
        </authorList>
    </citation>
    <scope>NUCLEOTIDE SEQUENCE [LARGE SCALE GENOMIC DNA]</scope>
    <source>
        <strain>DSM 22905 / CIP 110041 / 391-98 / NVH 391-98</strain>
    </source>
</reference>
<evidence type="ECO:0000255" key="1">
    <source>
        <dbReference type="HAMAP-Rule" id="MF_00636"/>
    </source>
</evidence>
<proteinExistence type="inferred from homology"/>
<gene>
    <name type="ordered locus">Bcer98_3698</name>
</gene>
<protein>
    <recommendedName>
        <fullName evidence="1">Nucleotide-binding protein Bcer98_3698</fullName>
    </recommendedName>
</protein>
<dbReference type="EMBL" id="CP000764">
    <property type="protein sequence ID" value="ABS23895.1"/>
    <property type="molecule type" value="Genomic_DNA"/>
</dbReference>
<dbReference type="SMR" id="A7GUT7"/>
<dbReference type="STRING" id="315749.Bcer98_3698"/>
<dbReference type="GeneID" id="33898945"/>
<dbReference type="KEGG" id="bcy:Bcer98_3698"/>
<dbReference type="eggNOG" id="COG1660">
    <property type="taxonomic scope" value="Bacteria"/>
</dbReference>
<dbReference type="HOGENOM" id="CLU_059558_0_0_9"/>
<dbReference type="OrthoDB" id="9784461at2"/>
<dbReference type="Proteomes" id="UP000002300">
    <property type="component" value="Chromosome"/>
</dbReference>
<dbReference type="GO" id="GO:0005524">
    <property type="term" value="F:ATP binding"/>
    <property type="evidence" value="ECO:0007669"/>
    <property type="project" value="UniProtKB-UniRule"/>
</dbReference>
<dbReference type="GO" id="GO:0005525">
    <property type="term" value="F:GTP binding"/>
    <property type="evidence" value="ECO:0007669"/>
    <property type="project" value="UniProtKB-UniRule"/>
</dbReference>
<dbReference type="Gene3D" id="3.40.50.300">
    <property type="entry name" value="P-loop containing nucleotide triphosphate hydrolases"/>
    <property type="match status" value="1"/>
</dbReference>
<dbReference type="HAMAP" id="MF_00636">
    <property type="entry name" value="RapZ_like"/>
    <property type="match status" value="1"/>
</dbReference>
<dbReference type="InterPro" id="IPR027417">
    <property type="entry name" value="P-loop_NTPase"/>
</dbReference>
<dbReference type="InterPro" id="IPR005337">
    <property type="entry name" value="RapZ-like"/>
</dbReference>
<dbReference type="InterPro" id="IPR053930">
    <property type="entry name" value="RapZ-like_N"/>
</dbReference>
<dbReference type="InterPro" id="IPR053931">
    <property type="entry name" value="RapZ_C"/>
</dbReference>
<dbReference type="NCBIfam" id="NF003828">
    <property type="entry name" value="PRK05416.1"/>
    <property type="match status" value="1"/>
</dbReference>
<dbReference type="PANTHER" id="PTHR30448">
    <property type="entry name" value="RNASE ADAPTER PROTEIN RAPZ"/>
    <property type="match status" value="1"/>
</dbReference>
<dbReference type="PANTHER" id="PTHR30448:SF0">
    <property type="entry name" value="RNASE ADAPTER PROTEIN RAPZ"/>
    <property type="match status" value="1"/>
</dbReference>
<dbReference type="Pfam" id="PF22740">
    <property type="entry name" value="PapZ_C"/>
    <property type="match status" value="1"/>
</dbReference>
<dbReference type="Pfam" id="PF03668">
    <property type="entry name" value="RapZ-like_N"/>
    <property type="match status" value="1"/>
</dbReference>
<dbReference type="PIRSF" id="PIRSF005052">
    <property type="entry name" value="P-loopkin"/>
    <property type="match status" value="1"/>
</dbReference>
<dbReference type="SUPFAM" id="SSF52540">
    <property type="entry name" value="P-loop containing nucleoside triphosphate hydrolases"/>
    <property type="match status" value="1"/>
</dbReference>
<accession>A7GUT7</accession>
<name>Y3698_BACCN</name>
<keyword id="KW-0067">ATP-binding</keyword>
<keyword id="KW-0342">GTP-binding</keyword>
<keyword id="KW-0547">Nucleotide-binding</keyword>
<organism>
    <name type="scientific">Bacillus cytotoxicus (strain DSM 22905 / CIP 110041 / 391-98 / NVH 391-98)</name>
    <dbReference type="NCBI Taxonomy" id="315749"/>
    <lineage>
        <taxon>Bacteria</taxon>
        <taxon>Bacillati</taxon>
        <taxon>Bacillota</taxon>
        <taxon>Bacilli</taxon>
        <taxon>Bacillales</taxon>
        <taxon>Bacillaceae</taxon>
        <taxon>Bacillus</taxon>
        <taxon>Bacillus cereus group</taxon>
    </lineage>
</organism>
<feature type="chain" id="PRO_1000082654" description="Nucleotide-binding protein Bcer98_3698">
    <location>
        <begin position="1"/>
        <end position="293"/>
    </location>
</feature>
<feature type="binding site" evidence="1">
    <location>
        <begin position="14"/>
        <end position="21"/>
    </location>
    <ligand>
        <name>ATP</name>
        <dbReference type="ChEBI" id="CHEBI:30616"/>
    </ligand>
</feature>
<feature type="binding site" evidence="1">
    <location>
        <begin position="65"/>
        <end position="68"/>
    </location>
    <ligand>
        <name>GTP</name>
        <dbReference type="ChEBI" id="CHEBI:37565"/>
    </ligand>
</feature>